<keyword id="KW-0028">Amino-acid biosynthesis</keyword>
<keyword id="KW-0057">Aromatic amino acid biosynthesis</keyword>
<keyword id="KW-0170">Cobalt</keyword>
<keyword id="KW-0963">Cytoplasm</keyword>
<keyword id="KW-0456">Lyase</keyword>
<keyword id="KW-0479">Metal-binding</keyword>
<keyword id="KW-0520">NAD</keyword>
<keyword id="KW-0547">Nucleotide-binding</keyword>
<keyword id="KW-1185">Reference proteome</keyword>
<keyword id="KW-0862">Zinc</keyword>
<proteinExistence type="inferred from homology"/>
<sequence>MHVTTIFDTVPVNGASPYEVVIGSGLTPLIAERAAGSGATQVALLHQPALAEVAADIDGALQAAGLQVLHLEVPDAESGKTLAVAGECWDKLGAAAFGRRDIIIGLGGGAATDLAGFVAAAWMRGVRVIQVPTTVLGMVDAAVGGKTGINTAAGKNLVGAFHEPDAVFIDLDRLHTLPDEEIIAGSAEIIKTGFIADEEILRLYESDASACLQREIDGSHLPELIARSVRVKGSVVSADLKESNLREILNYGHTFAHAVELREDFQWRHGNAVAVGMMFIANLSYNLGLIDADLLERHRVILDSIGLPTTYQGGVFDELYEGMTRDKKNRDGNIRFVALTAVGEVTRIEGPDRGELIRAYEAISS</sequence>
<organism>
    <name type="scientific">Corynebacterium efficiens (strain DSM 44549 / YS-314 / AJ 12310 / JCM 11189 / NBRC 100395)</name>
    <dbReference type="NCBI Taxonomy" id="196164"/>
    <lineage>
        <taxon>Bacteria</taxon>
        <taxon>Bacillati</taxon>
        <taxon>Actinomycetota</taxon>
        <taxon>Actinomycetes</taxon>
        <taxon>Mycobacteriales</taxon>
        <taxon>Corynebacteriaceae</taxon>
        <taxon>Corynebacterium</taxon>
    </lineage>
</organism>
<protein>
    <recommendedName>
        <fullName evidence="1">3-dehydroquinate synthase</fullName>
        <shortName evidence="1">DHQS</shortName>
        <ecNumber evidence="1">4.2.3.4</ecNumber>
    </recommendedName>
</protein>
<comment type="function">
    <text evidence="1">Catalyzes the conversion of 3-deoxy-D-arabino-heptulosonate 7-phosphate (DAHP) to dehydroquinate (DHQ).</text>
</comment>
<comment type="catalytic activity">
    <reaction evidence="1">
        <text>7-phospho-2-dehydro-3-deoxy-D-arabino-heptonate = 3-dehydroquinate + phosphate</text>
        <dbReference type="Rhea" id="RHEA:21968"/>
        <dbReference type="ChEBI" id="CHEBI:32364"/>
        <dbReference type="ChEBI" id="CHEBI:43474"/>
        <dbReference type="ChEBI" id="CHEBI:58394"/>
        <dbReference type="EC" id="4.2.3.4"/>
    </reaction>
</comment>
<comment type="cofactor">
    <cofactor evidence="1">
        <name>NAD(+)</name>
        <dbReference type="ChEBI" id="CHEBI:57540"/>
    </cofactor>
</comment>
<comment type="cofactor">
    <cofactor evidence="1">
        <name>Co(2+)</name>
        <dbReference type="ChEBI" id="CHEBI:48828"/>
    </cofactor>
    <cofactor evidence="1">
        <name>Zn(2+)</name>
        <dbReference type="ChEBI" id="CHEBI:29105"/>
    </cofactor>
    <text evidence="1">Binds 1 divalent metal cation per subunit. Can use either Co(2+) or Zn(2+).</text>
</comment>
<comment type="pathway">
    <text evidence="1">Metabolic intermediate biosynthesis; chorismate biosynthesis; chorismate from D-erythrose 4-phosphate and phosphoenolpyruvate: step 2/7.</text>
</comment>
<comment type="subcellular location">
    <subcellularLocation>
        <location evidence="1">Cytoplasm</location>
    </subcellularLocation>
</comment>
<comment type="similarity">
    <text evidence="1">Belongs to the sugar phosphate cyclases superfamily. Dehydroquinate synthase family.</text>
</comment>
<name>AROB_COREF</name>
<evidence type="ECO:0000255" key="1">
    <source>
        <dbReference type="HAMAP-Rule" id="MF_00110"/>
    </source>
</evidence>
<gene>
    <name evidence="1" type="primary">aroB</name>
    <name type="ordered locus">CE1740</name>
</gene>
<feature type="chain" id="PRO_0000140733" description="3-dehydroquinate synthase">
    <location>
        <begin position="1"/>
        <end position="365"/>
    </location>
</feature>
<feature type="binding site" evidence="1">
    <location>
        <begin position="75"/>
        <end position="80"/>
    </location>
    <ligand>
        <name>NAD(+)</name>
        <dbReference type="ChEBI" id="CHEBI:57540"/>
    </ligand>
</feature>
<feature type="binding site" evidence="1">
    <location>
        <begin position="109"/>
        <end position="113"/>
    </location>
    <ligand>
        <name>NAD(+)</name>
        <dbReference type="ChEBI" id="CHEBI:57540"/>
    </ligand>
</feature>
<feature type="binding site" evidence="1">
    <location>
        <begin position="133"/>
        <end position="134"/>
    </location>
    <ligand>
        <name>NAD(+)</name>
        <dbReference type="ChEBI" id="CHEBI:57540"/>
    </ligand>
</feature>
<feature type="binding site" evidence="1">
    <location>
        <position position="146"/>
    </location>
    <ligand>
        <name>NAD(+)</name>
        <dbReference type="ChEBI" id="CHEBI:57540"/>
    </ligand>
</feature>
<feature type="binding site" evidence="1">
    <location>
        <position position="155"/>
    </location>
    <ligand>
        <name>NAD(+)</name>
        <dbReference type="ChEBI" id="CHEBI:57540"/>
    </ligand>
</feature>
<feature type="binding site" evidence="1">
    <location>
        <position position="188"/>
    </location>
    <ligand>
        <name>Zn(2+)</name>
        <dbReference type="ChEBI" id="CHEBI:29105"/>
    </ligand>
</feature>
<feature type="binding site" evidence="1">
    <location>
        <position position="253"/>
    </location>
    <ligand>
        <name>Zn(2+)</name>
        <dbReference type="ChEBI" id="CHEBI:29105"/>
    </ligand>
</feature>
<feature type="binding site" evidence="1">
    <location>
        <position position="269"/>
    </location>
    <ligand>
        <name>Zn(2+)</name>
        <dbReference type="ChEBI" id="CHEBI:29105"/>
    </ligand>
</feature>
<dbReference type="EC" id="4.2.3.4" evidence="1"/>
<dbReference type="EMBL" id="BA000035">
    <property type="protein sequence ID" value="BAC18550.1"/>
    <property type="molecule type" value="Genomic_DNA"/>
</dbReference>
<dbReference type="RefSeq" id="WP_006767741.1">
    <property type="nucleotide sequence ID" value="NC_004369.1"/>
</dbReference>
<dbReference type="SMR" id="Q8FT31"/>
<dbReference type="STRING" id="196164.gene:10742161"/>
<dbReference type="KEGG" id="cef:CE1740"/>
<dbReference type="eggNOG" id="COG0337">
    <property type="taxonomic scope" value="Bacteria"/>
</dbReference>
<dbReference type="HOGENOM" id="CLU_001201_0_3_11"/>
<dbReference type="OrthoDB" id="9806583at2"/>
<dbReference type="UniPathway" id="UPA00053">
    <property type="reaction ID" value="UER00085"/>
</dbReference>
<dbReference type="Proteomes" id="UP000001409">
    <property type="component" value="Chromosome"/>
</dbReference>
<dbReference type="GO" id="GO:0005737">
    <property type="term" value="C:cytoplasm"/>
    <property type="evidence" value="ECO:0007669"/>
    <property type="project" value="UniProtKB-SubCell"/>
</dbReference>
<dbReference type="GO" id="GO:0003856">
    <property type="term" value="F:3-dehydroquinate synthase activity"/>
    <property type="evidence" value="ECO:0007669"/>
    <property type="project" value="UniProtKB-UniRule"/>
</dbReference>
<dbReference type="GO" id="GO:0046872">
    <property type="term" value="F:metal ion binding"/>
    <property type="evidence" value="ECO:0007669"/>
    <property type="project" value="UniProtKB-KW"/>
</dbReference>
<dbReference type="GO" id="GO:0000166">
    <property type="term" value="F:nucleotide binding"/>
    <property type="evidence" value="ECO:0007669"/>
    <property type="project" value="UniProtKB-KW"/>
</dbReference>
<dbReference type="GO" id="GO:0008652">
    <property type="term" value="P:amino acid biosynthetic process"/>
    <property type="evidence" value="ECO:0007669"/>
    <property type="project" value="UniProtKB-KW"/>
</dbReference>
<dbReference type="GO" id="GO:0009073">
    <property type="term" value="P:aromatic amino acid family biosynthetic process"/>
    <property type="evidence" value="ECO:0007669"/>
    <property type="project" value="UniProtKB-KW"/>
</dbReference>
<dbReference type="GO" id="GO:0009423">
    <property type="term" value="P:chorismate biosynthetic process"/>
    <property type="evidence" value="ECO:0007669"/>
    <property type="project" value="UniProtKB-UniRule"/>
</dbReference>
<dbReference type="CDD" id="cd08195">
    <property type="entry name" value="DHQS"/>
    <property type="match status" value="1"/>
</dbReference>
<dbReference type="FunFam" id="3.40.50.1970:FF:000007">
    <property type="entry name" value="Pentafunctional AROM polypeptide"/>
    <property type="match status" value="1"/>
</dbReference>
<dbReference type="Gene3D" id="3.40.50.1970">
    <property type="match status" value="1"/>
</dbReference>
<dbReference type="Gene3D" id="1.20.1090.10">
    <property type="entry name" value="Dehydroquinate synthase-like - alpha domain"/>
    <property type="match status" value="1"/>
</dbReference>
<dbReference type="HAMAP" id="MF_00110">
    <property type="entry name" value="DHQ_synthase"/>
    <property type="match status" value="1"/>
</dbReference>
<dbReference type="InterPro" id="IPR050071">
    <property type="entry name" value="Dehydroquinate_synthase"/>
</dbReference>
<dbReference type="InterPro" id="IPR016037">
    <property type="entry name" value="DHQ_synth_AroB"/>
</dbReference>
<dbReference type="InterPro" id="IPR030963">
    <property type="entry name" value="DHQ_synth_fam"/>
</dbReference>
<dbReference type="InterPro" id="IPR030960">
    <property type="entry name" value="DHQS/DOIS_N"/>
</dbReference>
<dbReference type="InterPro" id="IPR056179">
    <property type="entry name" value="DHQS_C"/>
</dbReference>
<dbReference type="NCBIfam" id="TIGR01357">
    <property type="entry name" value="aroB"/>
    <property type="match status" value="1"/>
</dbReference>
<dbReference type="PANTHER" id="PTHR43622">
    <property type="entry name" value="3-DEHYDROQUINATE SYNTHASE"/>
    <property type="match status" value="1"/>
</dbReference>
<dbReference type="PANTHER" id="PTHR43622:SF7">
    <property type="entry name" value="3-DEHYDROQUINATE SYNTHASE, CHLOROPLASTIC"/>
    <property type="match status" value="1"/>
</dbReference>
<dbReference type="Pfam" id="PF01761">
    <property type="entry name" value="DHQ_synthase"/>
    <property type="match status" value="1"/>
</dbReference>
<dbReference type="Pfam" id="PF24621">
    <property type="entry name" value="DHQS_C"/>
    <property type="match status" value="1"/>
</dbReference>
<dbReference type="PIRSF" id="PIRSF001455">
    <property type="entry name" value="DHQ_synth"/>
    <property type="match status" value="1"/>
</dbReference>
<dbReference type="SUPFAM" id="SSF56796">
    <property type="entry name" value="Dehydroquinate synthase-like"/>
    <property type="match status" value="1"/>
</dbReference>
<accession>Q8FT31</accession>
<reference key="1">
    <citation type="journal article" date="2003" name="Genome Res.">
        <title>Comparative complete genome sequence analysis of the amino acid replacements responsible for the thermostability of Corynebacterium efficiens.</title>
        <authorList>
            <person name="Nishio Y."/>
            <person name="Nakamura Y."/>
            <person name="Kawarabayasi Y."/>
            <person name="Usuda Y."/>
            <person name="Kimura E."/>
            <person name="Sugimoto S."/>
            <person name="Matsui K."/>
            <person name="Yamagishi A."/>
            <person name="Kikuchi H."/>
            <person name="Ikeo K."/>
            <person name="Gojobori T."/>
        </authorList>
    </citation>
    <scope>NUCLEOTIDE SEQUENCE [LARGE SCALE GENOMIC DNA]</scope>
    <source>
        <strain>DSM 44549 / YS-314 / AJ 12310 / JCM 11189 / NBRC 100395</strain>
    </source>
</reference>